<sequence length="443" mass="48172">MSAIVAANSPRVGFVSLGCPKALVDSERILTQLRVEGYEIVGGYEEADVVVVNTCAFIEAAQAESLDAIGEALDENGKVVVTGCLGTKGDLIRETHPGVLAITGPQDYEAVMAAVHAQCPPPARDAFTGLLPASGVKLTPRHYAYLKISEGCNHHCTFCIIPQLRGRLVSRPVDQVLAEAERLVGDGVRELLVISQDTSAYGVDTRYAAAEWRGVPRRTRMTELADALAELGVWVRLHYVYPYPHVDELIPLMAEGRIAPYLDMPLQHASPRILKAMRRPAGGEAVLERIRRWRQRCPDLTLRSTFIVGFPGETEDDFQVLLEFLEAAELDRVGCFTYSPVEGAAANALADPVPEAIAEQRQARLMALQAEISARRLARRVGTECTVLLDAVDGDAAVGRSQLEAPEVDGVIHLRGAEGCAPGQWVPARLEDADEHDLYGRVL</sequence>
<reference key="1">
    <citation type="submission" date="2006-08" db="EMBL/GenBank/DDBJ databases">
        <title>Complete sequence of Alkalilimnicola ehrilichei MLHE-1.</title>
        <authorList>
            <person name="Copeland A."/>
            <person name="Lucas S."/>
            <person name="Lapidus A."/>
            <person name="Barry K."/>
            <person name="Detter J.C."/>
            <person name="Glavina del Rio T."/>
            <person name="Hammon N."/>
            <person name="Israni S."/>
            <person name="Dalin E."/>
            <person name="Tice H."/>
            <person name="Pitluck S."/>
            <person name="Sims D."/>
            <person name="Brettin T."/>
            <person name="Bruce D."/>
            <person name="Han C."/>
            <person name="Tapia R."/>
            <person name="Gilna P."/>
            <person name="Schmutz J."/>
            <person name="Larimer F."/>
            <person name="Land M."/>
            <person name="Hauser L."/>
            <person name="Kyrpides N."/>
            <person name="Mikhailova N."/>
            <person name="Oremland R.S."/>
            <person name="Hoeft S.E."/>
            <person name="Switzer-Blum J."/>
            <person name="Kulp T."/>
            <person name="King G."/>
            <person name="Tabita R."/>
            <person name="Witte B."/>
            <person name="Santini J.M."/>
            <person name="Basu P."/>
            <person name="Hollibaugh J.T."/>
            <person name="Xie G."/>
            <person name="Stolz J.F."/>
            <person name="Richardson P."/>
        </authorList>
    </citation>
    <scope>NUCLEOTIDE SEQUENCE [LARGE SCALE GENOMIC DNA]</scope>
    <source>
        <strain>ATCC BAA-1101 / DSM 17681 / MLHE-1</strain>
    </source>
</reference>
<keyword id="KW-0004">4Fe-4S</keyword>
<keyword id="KW-0963">Cytoplasm</keyword>
<keyword id="KW-0408">Iron</keyword>
<keyword id="KW-0411">Iron-sulfur</keyword>
<keyword id="KW-0479">Metal-binding</keyword>
<keyword id="KW-1185">Reference proteome</keyword>
<keyword id="KW-0949">S-adenosyl-L-methionine</keyword>
<keyword id="KW-0808">Transferase</keyword>
<gene>
    <name evidence="1" type="primary">rimO</name>
    <name type="ordered locus">Mlg_1499</name>
</gene>
<name>RIMO_ALKEH</name>
<feature type="chain" id="PRO_0000374692" description="Ribosomal protein uS12 methylthiotransferase RimO">
    <location>
        <begin position="1"/>
        <end position="443"/>
    </location>
</feature>
<feature type="domain" description="MTTase N-terminal" evidence="1">
    <location>
        <begin position="10"/>
        <end position="120"/>
    </location>
</feature>
<feature type="domain" description="Radical SAM core" evidence="2">
    <location>
        <begin position="138"/>
        <end position="375"/>
    </location>
</feature>
<feature type="domain" description="TRAM" evidence="1">
    <location>
        <begin position="378"/>
        <end position="443"/>
    </location>
</feature>
<feature type="binding site" evidence="1">
    <location>
        <position position="19"/>
    </location>
    <ligand>
        <name>[4Fe-4S] cluster</name>
        <dbReference type="ChEBI" id="CHEBI:49883"/>
        <label>1</label>
    </ligand>
</feature>
<feature type="binding site" evidence="1">
    <location>
        <position position="55"/>
    </location>
    <ligand>
        <name>[4Fe-4S] cluster</name>
        <dbReference type="ChEBI" id="CHEBI:49883"/>
        <label>1</label>
    </ligand>
</feature>
<feature type="binding site" evidence="1">
    <location>
        <position position="84"/>
    </location>
    <ligand>
        <name>[4Fe-4S] cluster</name>
        <dbReference type="ChEBI" id="CHEBI:49883"/>
        <label>1</label>
    </ligand>
</feature>
<feature type="binding site" evidence="1">
    <location>
        <position position="152"/>
    </location>
    <ligand>
        <name>[4Fe-4S] cluster</name>
        <dbReference type="ChEBI" id="CHEBI:49883"/>
        <label>2</label>
        <note>4Fe-4S-S-AdoMet</note>
    </ligand>
</feature>
<feature type="binding site" evidence="1">
    <location>
        <position position="156"/>
    </location>
    <ligand>
        <name>[4Fe-4S] cluster</name>
        <dbReference type="ChEBI" id="CHEBI:49883"/>
        <label>2</label>
        <note>4Fe-4S-S-AdoMet</note>
    </ligand>
</feature>
<feature type="binding site" evidence="1">
    <location>
        <position position="159"/>
    </location>
    <ligand>
        <name>[4Fe-4S] cluster</name>
        <dbReference type="ChEBI" id="CHEBI:49883"/>
        <label>2</label>
        <note>4Fe-4S-S-AdoMet</note>
    </ligand>
</feature>
<protein>
    <recommendedName>
        <fullName evidence="1">Ribosomal protein uS12 methylthiotransferase RimO</fullName>
        <shortName evidence="1">uS12 MTTase</shortName>
        <shortName evidence="1">uS12 methylthiotransferase</shortName>
        <ecNumber evidence="1">2.8.4.4</ecNumber>
    </recommendedName>
    <alternativeName>
        <fullName evidence="1">Ribosomal protein uS12 (aspartate-C(3))-methylthiotransferase</fullName>
    </alternativeName>
    <alternativeName>
        <fullName evidence="1">Ribosome maturation factor RimO</fullName>
    </alternativeName>
</protein>
<proteinExistence type="inferred from homology"/>
<dbReference type="EC" id="2.8.4.4" evidence="1"/>
<dbReference type="EMBL" id="CP000453">
    <property type="protein sequence ID" value="ABI56848.1"/>
    <property type="molecule type" value="Genomic_DNA"/>
</dbReference>
<dbReference type="RefSeq" id="WP_011629243.1">
    <property type="nucleotide sequence ID" value="NC_008340.1"/>
</dbReference>
<dbReference type="SMR" id="Q0A8I9"/>
<dbReference type="KEGG" id="aeh:Mlg_1499"/>
<dbReference type="eggNOG" id="COG0621">
    <property type="taxonomic scope" value="Bacteria"/>
</dbReference>
<dbReference type="HOGENOM" id="CLU_018697_0_0_6"/>
<dbReference type="OrthoDB" id="9805215at2"/>
<dbReference type="Proteomes" id="UP000001962">
    <property type="component" value="Chromosome"/>
</dbReference>
<dbReference type="GO" id="GO:0005829">
    <property type="term" value="C:cytosol"/>
    <property type="evidence" value="ECO:0007669"/>
    <property type="project" value="TreeGrafter"/>
</dbReference>
<dbReference type="GO" id="GO:0051539">
    <property type="term" value="F:4 iron, 4 sulfur cluster binding"/>
    <property type="evidence" value="ECO:0007669"/>
    <property type="project" value="UniProtKB-UniRule"/>
</dbReference>
<dbReference type="GO" id="GO:0035599">
    <property type="term" value="F:aspartic acid methylthiotransferase activity"/>
    <property type="evidence" value="ECO:0007669"/>
    <property type="project" value="TreeGrafter"/>
</dbReference>
<dbReference type="GO" id="GO:0046872">
    <property type="term" value="F:metal ion binding"/>
    <property type="evidence" value="ECO:0007669"/>
    <property type="project" value="UniProtKB-KW"/>
</dbReference>
<dbReference type="GO" id="GO:0103039">
    <property type="term" value="F:protein methylthiotransferase activity"/>
    <property type="evidence" value="ECO:0007669"/>
    <property type="project" value="UniProtKB-EC"/>
</dbReference>
<dbReference type="GO" id="GO:0006400">
    <property type="term" value="P:tRNA modification"/>
    <property type="evidence" value="ECO:0007669"/>
    <property type="project" value="InterPro"/>
</dbReference>
<dbReference type="CDD" id="cd01335">
    <property type="entry name" value="Radical_SAM"/>
    <property type="match status" value="1"/>
</dbReference>
<dbReference type="FunFam" id="3.40.50.12160:FF:000002">
    <property type="entry name" value="Ribosomal protein S12 methylthiotransferase RimO"/>
    <property type="match status" value="1"/>
</dbReference>
<dbReference type="FunFam" id="3.80.30.20:FF:000001">
    <property type="entry name" value="tRNA-2-methylthio-N(6)-dimethylallyladenosine synthase 2"/>
    <property type="match status" value="1"/>
</dbReference>
<dbReference type="Gene3D" id="3.40.50.12160">
    <property type="entry name" value="Methylthiotransferase, N-terminal domain"/>
    <property type="match status" value="1"/>
</dbReference>
<dbReference type="Gene3D" id="2.40.50.140">
    <property type="entry name" value="Nucleic acid-binding proteins"/>
    <property type="match status" value="1"/>
</dbReference>
<dbReference type="Gene3D" id="3.80.30.20">
    <property type="entry name" value="tm_1862 like domain"/>
    <property type="match status" value="1"/>
</dbReference>
<dbReference type="HAMAP" id="MF_01865">
    <property type="entry name" value="MTTase_RimO"/>
    <property type="match status" value="1"/>
</dbReference>
<dbReference type="InterPro" id="IPR006638">
    <property type="entry name" value="Elp3/MiaA/NifB-like_rSAM"/>
</dbReference>
<dbReference type="InterPro" id="IPR005839">
    <property type="entry name" value="Methylthiotransferase"/>
</dbReference>
<dbReference type="InterPro" id="IPR020612">
    <property type="entry name" value="Methylthiotransferase_CS"/>
</dbReference>
<dbReference type="InterPro" id="IPR013848">
    <property type="entry name" value="Methylthiotransferase_N"/>
</dbReference>
<dbReference type="InterPro" id="IPR038135">
    <property type="entry name" value="Methylthiotransferase_N_sf"/>
</dbReference>
<dbReference type="InterPro" id="IPR012340">
    <property type="entry name" value="NA-bd_OB-fold"/>
</dbReference>
<dbReference type="InterPro" id="IPR005840">
    <property type="entry name" value="Ribosomal_uS12_MeSTrfase_RimO"/>
</dbReference>
<dbReference type="InterPro" id="IPR007197">
    <property type="entry name" value="rSAM"/>
</dbReference>
<dbReference type="InterPro" id="IPR023404">
    <property type="entry name" value="rSAM_horseshoe"/>
</dbReference>
<dbReference type="InterPro" id="IPR002792">
    <property type="entry name" value="TRAM_dom"/>
</dbReference>
<dbReference type="NCBIfam" id="TIGR01125">
    <property type="entry name" value="30S ribosomal protein S12 methylthiotransferase RimO"/>
    <property type="match status" value="1"/>
</dbReference>
<dbReference type="NCBIfam" id="TIGR00089">
    <property type="entry name" value="MiaB/RimO family radical SAM methylthiotransferase"/>
    <property type="match status" value="1"/>
</dbReference>
<dbReference type="PANTHER" id="PTHR43837">
    <property type="entry name" value="RIBOSOMAL PROTEIN S12 METHYLTHIOTRANSFERASE RIMO"/>
    <property type="match status" value="1"/>
</dbReference>
<dbReference type="PANTHER" id="PTHR43837:SF1">
    <property type="entry name" value="RIBOSOMAL PROTEIN US12 METHYLTHIOTRANSFERASE RIMO"/>
    <property type="match status" value="1"/>
</dbReference>
<dbReference type="Pfam" id="PF04055">
    <property type="entry name" value="Radical_SAM"/>
    <property type="match status" value="1"/>
</dbReference>
<dbReference type="Pfam" id="PF18693">
    <property type="entry name" value="TRAM_2"/>
    <property type="match status" value="1"/>
</dbReference>
<dbReference type="Pfam" id="PF00919">
    <property type="entry name" value="UPF0004"/>
    <property type="match status" value="1"/>
</dbReference>
<dbReference type="SFLD" id="SFLDG01082">
    <property type="entry name" value="B12-binding_domain_containing"/>
    <property type="match status" value="1"/>
</dbReference>
<dbReference type="SFLD" id="SFLDG01061">
    <property type="entry name" value="methylthiotransferase"/>
    <property type="match status" value="1"/>
</dbReference>
<dbReference type="SFLD" id="SFLDF00274">
    <property type="entry name" value="ribosomal_protein_S12_methylth"/>
    <property type="match status" value="1"/>
</dbReference>
<dbReference type="SMART" id="SM00729">
    <property type="entry name" value="Elp3"/>
    <property type="match status" value="1"/>
</dbReference>
<dbReference type="SUPFAM" id="SSF102114">
    <property type="entry name" value="Radical SAM enzymes"/>
    <property type="match status" value="1"/>
</dbReference>
<dbReference type="PROSITE" id="PS51449">
    <property type="entry name" value="MTTASE_N"/>
    <property type="match status" value="1"/>
</dbReference>
<dbReference type="PROSITE" id="PS01278">
    <property type="entry name" value="MTTASE_RADICAL"/>
    <property type="match status" value="1"/>
</dbReference>
<dbReference type="PROSITE" id="PS51918">
    <property type="entry name" value="RADICAL_SAM"/>
    <property type="match status" value="1"/>
</dbReference>
<dbReference type="PROSITE" id="PS50926">
    <property type="entry name" value="TRAM"/>
    <property type="match status" value="1"/>
</dbReference>
<accession>Q0A8I9</accession>
<organism>
    <name type="scientific">Alkalilimnicola ehrlichii (strain ATCC BAA-1101 / DSM 17681 / MLHE-1)</name>
    <dbReference type="NCBI Taxonomy" id="187272"/>
    <lineage>
        <taxon>Bacteria</taxon>
        <taxon>Pseudomonadati</taxon>
        <taxon>Pseudomonadota</taxon>
        <taxon>Gammaproteobacteria</taxon>
        <taxon>Chromatiales</taxon>
        <taxon>Ectothiorhodospiraceae</taxon>
        <taxon>Alkalilimnicola</taxon>
    </lineage>
</organism>
<comment type="function">
    <text evidence="1">Catalyzes the methylthiolation of an aspartic acid residue of ribosomal protein uS12.</text>
</comment>
<comment type="catalytic activity">
    <reaction evidence="1">
        <text>L-aspartate(89)-[ribosomal protein uS12]-hydrogen + (sulfur carrier)-SH + AH2 + 2 S-adenosyl-L-methionine = 3-methylsulfanyl-L-aspartate(89)-[ribosomal protein uS12]-hydrogen + (sulfur carrier)-H + 5'-deoxyadenosine + L-methionine + A + S-adenosyl-L-homocysteine + 2 H(+)</text>
        <dbReference type="Rhea" id="RHEA:37087"/>
        <dbReference type="Rhea" id="RHEA-COMP:10460"/>
        <dbReference type="Rhea" id="RHEA-COMP:10461"/>
        <dbReference type="Rhea" id="RHEA-COMP:14737"/>
        <dbReference type="Rhea" id="RHEA-COMP:14739"/>
        <dbReference type="ChEBI" id="CHEBI:13193"/>
        <dbReference type="ChEBI" id="CHEBI:15378"/>
        <dbReference type="ChEBI" id="CHEBI:17319"/>
        <dbReference type="ChEBI" id="CHEBI:17499"/>
        <dbReference type="ChEBI" id="CHEBI:29917"/>
        <dbReference type="ChEBI" id="CHEBI:29961"/>
        <dbReference type="ChEBI" id="CHEBI:57844"/>
        <dbReference type="ChEBI" id="CHEBI:57856"/>
        <dbReference type="ChEBI" id="CHEBI:59789"/>
        <dbReference type="ChEBI" id="CHEBI:64428"/>
        <dbReference type="ChEBI" id="CHEBI:73599"/>
        <dbReference type="EC" id="2.8.4.4"/>
    </reaction>
</comment>
<comment type="cofactor">
    <cofactor evidence="1">
        <name>[4Fe-4S] cluster</name>
        <dbReference type="ChEBI" id="CHEBI:49883"/>
    </cofactor>
    <text evidence="1">Binds 2 [4Fe-4S] clusters. One cluster is coordinated with 3 cysteines and an exchangeable S-adenosyl-L-methionine.</text>
</comment>
<comment type="subcellular location">
    <subcellularLocation>
        <location evidence="1">Cytoplasm</location>
    </subcellularLocation>
</comment>
<comment type="similarity">
    <text evidence="1">Belongs to the methylthiotransferase family. RimO subfamily.</text>
</comment>
<evidence type="ECO:0000255" key="1">
    <source>
        <dbReference type="HAMAP-Rule" id="MF_01865"/>
    </source>
</evidence>
<evidence type="ECO:0000255" key="2">
    <source>
        <dbReference type="PROSITE-ProRule" id="PRU01266"/>
    </source>
</evidence>